<keyword id="KW-0007">Acetylation</keyword>
<keyword id="KW-0106">Calcium</keyword>
<keyword id="KW-0143">Chaperone</keyword>
<keyword id="KW-0963">Cytoplasm</keyword>
<keyword id="KW-0968">Cytoplasmic vesicle</keyword>
<keyword id="KW-1015">Disulfide bond</keyword>
<keyword id="KW-0256">Endoplasmic reticulum</keyword>
<keyword id="KW-0272">Extracellular matrix</keyword>
<keyword id="KW-0379">Hydroxylation</keyword>
<keyword id="KW-0430">Lectin</keyword>
<keyword id="KW-0458">Lysosome</keyword>
<keyword id="KW-0479">Metal-binding</keyword>
<keyword id="KW-0677">Repeat</keyword>
<keyword id="KW-0703">Sarcoplasmic reticulum</keyword>
<keyword id="KW-0964">Secreted</keyword>
<keyword id="KW-0732">Signal</keyword>
<keyword id="KW-0862">Zinc</keyword>
<name>CALR_MACFU</name>
<feature type="signal peptide" evidence="1">
    <location>
        <begin position="1"/>
        <end position="17"/>
    </location>
</feature>
<feature type="chain" id="PRO_0000246151" description="Calreticulin">
    <location>
        <begin position="18"/>
        <end position="417"/>
    </location>
</feature>
<feature type="repeat" description="1-1">
    <location>
        <begin position="191"/>
        <end position="202"/>
    </location>
</feature>
<feature type="repeat" description="1-2">
    <location>
        <begin position="210"/>
        <end position="221"/>
    </location>
</feature>
<feature type="repeat" description="1-3">
    <location>
        <begin position="227"/>
        <end position="238"/>
    </location>
</feature>
<feature type="repeat" description="1-4">
    <location>
        <begin position="244"/>
        <end position="255"/>
    </location>
</feature>
<feature type="repeat" description="2-1">
    <location>
        <begin position="259"/>
        <end position="269"/>
    </location>
</feature>
<feature type="repeat" description="2-2">
    <location>
        <begin position="273"/>
        <end position="283"/>
    </location>
</feature>
<feature type="repeat" description="2-3">
    <location>
        <begin position="287"/>
        <end position="297"/>
    </location>
</feature>
<feature type="region of interest" description="N-domain">
    <location>
        <begin position="18"/>
        <end position="197"/>
    </location>
</feature>
<feature type="region of interest" description="4 X approximate repeats">
    <location>
        <begin position="191"/>
        <end position="255"/>
    </location>
</feature>
<feature type="region of interest" description="Disordered" evidence="8">
    <location>
        <begin position="193"/>
        <end position="278"/>
    </location>
</feature>
<feature type="region of interest" description="P-domain">
    <location>
        <begin position="198"/>
        <end position="308"/>
    </location>
</feature>
<feature type="region of interest" description="Interaction with PPIB" evidence="1">
    <location>
        <begin position="237"/>
        <end position="270"/>
    </location>
</feature>
<feature type="region of interest" description="3 X approximate repeats">
    <location>
        <begin position="259"/>
        <end position="297"/>
    </location>
</feature>
<feature type="region of interest" description="C-domain">
    <location>
        <begin position="309"/>
        <end position="417"/>
    </location>
</feature>
<feature type="region of interest" description="Disordered" evidence="8">
    <location>
        <begin position="350"/>
        <end position="417"/>
    </location>
</feature>
<feature type="short sequence motif" description="Prevents secretion from ER" evidence="7">
    <location>
        <begin position="414"/>
        <end position="417"/>
    </location>
</feature>
<feature type="compositionally biased region" description="Basic and acidic residues" evidence="8">
    <location>
        <begin position="207"/>
        <end position="251"/>
    </location>
</feature>
<feature type="compositionally biased region" description="Acidic residues" evidence="8">
    <location>
        <begin position="252"/>
        <end position="261"/>
    </location>
</feature>
<feature type="compositionally biased region" description="Basic and acidic residues" evidence="8">
    <location>
        <begin position="352"/>
        <end position="379"/>
    </location>
</feature>
<feature type="compositionally biased region" description="Acidic residues" evidence="8">
    <location>
        <begin position="380"/>
        <end position="409"/>
    </location>
</feature>
<feature type="binding site" evidence="1">
    <location>
        <position position="26"/>
    </location>
    <ligand>
        <name>Ca(2+)</name>
        <dbReference type="ChEBI" id="CHEBI:29108"/>
    </ligand>
</feature>
<feature type="binding site" evidence="1">
    <location>
        <position position="62"/>
    </location>
    <ligand>
        <name>Ca(2+)</name>
        <dbReference type="ChEBI" id="CHEBI:29108"/>
    </ligand>
</feature>
<feature type="binding site" evidence="1">
    <location>
        <position position="64"/>
    </location>
    <ligand>
        <name>Ca(2+)</name>
        <dbReference type="ChEBI" id="CHEBI:29108"/>
    </ligand>
</feature>
<feature type="binding site" evidence="2">
    <location>
        <position position="109"/>
    </location>
    <ligand>
        <name>an alpha-D-glucoside</name>
        <dbReference type="ChEBI" id="CHEBI:22390"/>
    </ligand>
</feature>
<feature type="binding site" evidence="2">
    <location>
        <position position="111"/>
    </location>
    <ligand>
        <name>an alpha-D-glucoside</name>
        <dbReference type="ChEBI" id="CHEBI:22390"/>
    </ligand>
</feature>
<feature type="binding site" evidence="2">
    <location>
        <position position="128"/>
    </location>
    <ligand>
        <name>an alpha-D-glucoside</name>
        <dbReference type="ChEBI" id="CHEBI:22390"/>
    </ligand>
</feature>
<feature type="binding site" evidence="2">
    <location>
        <position position="135"/>
    </location>
    <ligand>
        <name>an alpha-D-glucoside</name>
        <dbReference type="ChEBI" id="CHEBI:22390"/>
    </ligand>
</feature>
<feature type="binding site" evidence="2">
    <location>
        <position position="317"/>
    </location>
    <ligand>
        <name>an alpha-D-glucoside</name>
        <dbReference type="ChEBI" id="CHEBI:22390"/>
    </ligand>
</feature>
<feature type="binding site" evidence="1">
    <location>
        <position position="328"/>
    </location>
    <ligand>
        <name>Ca(2+)</name>
        <dbReference type="ChEBI" id="CHEBI:29108"/>
    </ligand>
</feature>
<feature type="modified residue" description="N6-acetyllysine" evidence="4">
    <location>
        <position position="48"/>
    </location>
</feature>
<feature type="modified residue" description="N6-(2-hydroxyisobutyryl)lysine" evidence="4">
    <location>
        <position position="64"/>
    </location>
</feature>
<feature type="modified residue" description="N6-acetyllysine" evidence="4">
    <location>
        <position position="159"/>
    </location>
</feature>
<feature type="modified residue" description="N6-acetyllysine" evidence="4">
    <location>
        <position position="209"/>
    </location>
</feature>
<feature type="disulfide bond" evidence="1">
    <location>
        <begin position="105"/>
        <end position="137"/>
    </location>
</feature>
<protein>
    <recommendedName>
        <fullName>Calreticulin</fullName>
    </recommendedName>
</protein>
<comment type="function">
    <text evidence="4 5 6">Calcium-binding chaperone that promotes folding, oligomeric assembly and quality control in the endoplasmic reticulum (ER) via the calreticulin/calnexin cycle. This lectin interacts transiently with almost all of the monoglucosylated glycoproteins that are synthesized in the ER. Interacts with the DNA-binding domain of NR3C1 and mediates its nuclear export (By similarity). Involved in maternal gene expression regulation. May participate in oocyte maturation via the regulation of calcium homeostasis (By similarity). Present in the cortical granules of non-activated oocytes, is exocytosed during the cortical reaction in response to oocyte activation and might participate in the block to polyspermy (By similarity).</text>
</comment>
<comment type="subunit">
    <text evidence="2 3 4">Monomer. Component of an EIF2 complex at least composed of CELF1/CUGBP1, CALR, CALR3, EIF2S1, EIF2S2, HSP90B1 and HSPA5. Interacts with PDIA3/ERp57 and SPACA9 (By similarity). Interacts with TRIM21. Interacts with NR3C1. Interacts with PPIB. Interacts (via P-domain) with PDIA5. Interacts with GABARAP. Interacts with CLCC1 (By similarity).</text>
</comment>
<comment type="subcellular location">
    <subcellularLocation>
        <location evidence="4">Endoplasmic reticulum lumen</location>
    </subcellularLocation>
    <subcellularLocation>
        <location evidence="4">Cytoplasm</location>
        <location evidence="4">Cytosol</location>
    </subcellularLocation>
    <subcellularLocation>
        <location evidence="4">Secreted</location>
        <location evidence="4">Extracellular space</location>
        <location evidence="4">Extracellular matrix</location>
    </subcellularLocation>
    <subcellularLocation>
        <location evidence="4">Cell surface</location>
    </subcellularLocation>
    <subcellularLocation>
        <location evidence="5">Sarcoplasmic reticulum lumen</location>
    </subcellularLocation>
    <subcellularLocation>
        <location evidence="6">Cytoplasmic vesicle</location>
        <location evidence="6">Secretory vesicle</location>
        <location evidence="6">Cortical granule</location>
    </subcellularLocation>
    <subcellularLocation>
        <location evidence="4">Cytolytic granule</location>
    </subcellularLocation>
    <text evidence="4 5 6">Also found in cell surface (T cells), cytosol and extracellular matrix. During oocyte maturation and after parthenogenetic activation accumulates in cortical granules. In pronuclear and early cleaved embryos localizes weakly to cytoplasm around nucleus and more strongly in the region near the cortex (By similarity). In cortical granules of non-activated oocytes, is exocytosed during the cortical reaction in response to oocyte activation (By similarity).</text>
</comment>
<comment type="domain">
    <text evidence="1">Can be divided into a N-terminal globular domain, a proline-rich P-domain forming an elongated arm-like structure and a C-terminal acidic domain. The P-domain binds one molecule of calcium with high affinity, whereas the acidic C-domain binds multiple calcium ions with low affinity (By similarity).</text>
</comment>
<comment type="domain">
    <text evidence="1">The interaction with glycans occurs through a binding site in the globular lectin domain.</text>
</comment>
<comment type="domain">
    <text evidence="1">The zinc binding sites are localized to the N-domain.</text>
</comment>
<comment type="domain">
    <text evidence="1">Associates with PDIA3 through the tip of the extended arm formed by the P-domain.</text>
</comment>
<comment type="similarity">
    <text evidence="9">Belongs to the calreticulin family.</text>
</comment>
<proteinExistence type="evidence at transcript level"/>
<evidence type="ECO:0000250" key="1"/>
<evidence type="ECO:0000250" key="2">
    <source>
        <dbReference type="UniProtKB" id="P14211"/>
    </source>
</evidence>
<evidence type="ECO:0000250" key="3">
    <source>
        <dbReference type="UniProtKB" id="P18418"/>
    </source>
</evidence>
<evidence type="ECO:0000250" key="4">
    <source>
        <dbReference type="UniProtKB" id="P27797"/>
    </source>
</evidence>
<evidence type="ECO:0000250" key="5">
    <source>
        <dbReference type="UniProtKB" id="P28491"/>
    </source>
</evidence>
<evidence type="ECO:0000250" key="6">
    <source>
        <dbReference type="UniProtKB" id="Q8K3H7"/>
    </source>
</evidence>
<evidence type="ECO:0000255" key="7">
    <source>
        <dbReference type="PROSITE-ProRule" id="PRU10138"/>
    </source>
</evidence>
<evidence type="ECO:0000256" key="8">
    <source>
        <dbReference type="SAM" id="MobiDB-lite"/>
    </source>
</evidence>
<evidence type="ECO:0000305" key="9"/>
<organism>
    <name type="scientific">Macaca fuscata fuscata</name>
    <name type="common">Japanese macaque</name>
    <dbReference type="NCBI Taxonomy" id="9543"/>
    <lineage>
        <taxon>Eukaryota</taxon>
        <taxon>Metazoa</taxon>
        <taxon>Chordata</taxon>
        <taxon>Craniata</taxon>
        <taxon>Vertebrata</taxon>
        <taxon>Euteleostomi</taxon>
        <taxon>Mammalia</taxon>
        <taxon>Eutheria</taxon>
        <taxon>Euarchontoglires</taxon>
        <taxon>Primates</taxon>
        <taxon>Haplorrhini</taxon>
        <taxon>Catarrhini</taxon>
        <taxon>Cercopithecidae</taxon>
        <taxon>Cercopithecinae</taxon>
        <taxon>Macaca</taxon>
    </lineage>
</organism>
<reference key="1">
    <citation type="journal article" date="2006" name="J. Med. Primatol.">
        <title>Molecular cloning and gene expression of endoplasmic reticulum stress proteins in Japanese monkey, Macaca fuscata.</title>
        <authorList>
            <person name="Higashino A."/>
            <person name="Fukuhara R."/>
            <person name="Tezuka T."/>
            <person name="Kageyama T."/>
        </authorList>
    </citation>
    <scope>NUCLEOTIDE SEQUENCE [MRNA]</scope>
</reference>
<sequence length="417" mass="48114">MLLSVPLLLGLLGLAAAEPAVYFKEQFLDGDGWTSRWIESKHKSDFGKFVLSSGKFYGDEEKDKGLQTSQDARFYALSASFEPFSNKGQTLVVQFTVKHEQNIDCGGGYVKLFPNSLDQTDMHGDSEYNIMFGPDICGPGTKKVHVIFNYKGKNVLINKDIRCKDDEFTHLYTLIVRPDNTYEVKIDNSQVESGSLEDDWDFLPPKKIKDPDASKPEDWDERAKIDDPTDSKPEDWDKPEHIPDPDAKKPEDWDEEMDGEWEPPVIQNPEYKGEWKPRQIDNPDYKGTWIHPEIDNPEYSPDPSIYAYDNFGVLGLDLWQVKSGTIFDNFLITNDEAYAEEFGNETWGVTKAAEKQMKDKQDEEQRLKEEEEDKKRKEEEEAEDKEDDEDKDEDEEDEEDKEEDEEEDVPGQAKDEL</sequence>
<accession>Q2HWU3</accession>
<gene>
    <name type="primary">CALR</name>
    <name type="synonym">CRT</name>
</gene>
<dbReference type="EMBL" id="AB232155">
    <property type="protein sequence ID" value="BAE79725.1"/>
    <property type="molecule type" value="mRNA"/>
</dbReference>
<dbReference type="SMR" id="Q2HWU3"/>
<dbReference type="GO" id="GO:0009986">
    <property type="term" value="C:cell surface"/>
    <property type="evidence" value="ECO:0007669"/>
    <property type="project" value="UniProtKB-SubCell"/>
</dbReference>
<dbReference type="GO" id="GO:0060473">
    <property type="term" value="C:cortical granule"/>
    <property type="evidence" value="ECO:0000250"/>
    <property type="project" value="UniProtKB"/>
</dbReference>
<dbReference type="GO" id="GO:0044194">
    <property type="term" value="C:cytolytic granule"/>
    <property type="evidence" value="ECO:0007669"/>
    <property type="project" value="UniProtKB-SubCell"/>
</dbReference>
<dbReference type="GO" id="GO:0005829">
    <property type="term" value="C:cytosol"/>
    <property type="evidence" value="ECO:0007669"/>
    <property type="project" value="UniProtKB-SubCell"/>
</dbReference>
<dbReference type="GO" id="GO:0005789">
    <property type="term" value="C:endoplasmic reticulum membrane"/>
    <property type="evidence" value="ECO:0007669"/>
    <property type="project" value="TreeGrafter"/>
</dbReference>
<dbReference type="GO" id="GO:0005576">
    <property type="term" value="C:extracellular region"/>
    <property type="evidence" value="ECO:0007669"/>
    <property type="project" value="UniProtKB-KW"/>
</dbReference>
<dbReference type="GO" id="GO:0033018">
    <property type="term" value="C:sarcoplasmic reticulum lumen"/>
    <property type="evidence" value="ECO:0007669"/>
    <property type="project" value="UniProtKB-SubCell"/>
</dbReference>
<dbReference type="GO" id="GO:0005509">
    <property type="term" value="F:calcium ion binding"/>
    <property type="evidence" value="ECO:0000250"/>
    <property type="project" value="UniProtKB"/>
</dbReference>
<dbReference type="GO" id="GO:0030246">
    <property type="term" value="F:carbohydrate binding"/>
    <property type="evidence" value="ECO:0007669"/>
    <property type="project" value="UniProtKB-KW"/>
</dbReference>
<dbReference type="GO" id="GO:0051082">
    <property type="term" value="F:unfolded protein binding"/>
    <property type="evidence" value="ECO:0007669"/>
    <property type="project" value="InterPro"/>
</dbReference>
<dbReference type="GO" id="GO:0036503">
    <property type="term" value="P:ERAD pathway"/>
    <property type="evidence" value="ECO:0007669"/>
    <property type="project" value="TreeGrafter"/>
</dbReference>
<dbReference type="GO" id="GO:0006457">
    <property type="term" value="P:protein folding"/>
    <property type="evidence" value="ECO:0007669"/>
    <property type="project" value="InterPro"/>
</dbReference>
<dbReference type="GO" id="GO:0050821">
    <property type="term" value="P:protein stabilization"/>
    <property type="evidence" value="ECO:0000250"/>
    <property type="project" value="UniProtKB"/>
</dbReference>
<dbReference type="FunFam" id="2.10.250.10:FF:000002">
    <property type="entry name" value="Calreticulin"/>
    <property type="match status" value="1"/>
</dbReference>
<dbReference type="FunFam" id="2.60.120.200:FF:000113">
    <property type="entry name" value="Calreticulin 3"/>
    <property type="match status" value="1"/>
</dbReference>
<dbReference type="FunFam" id="2.60.120.200:FF:000122">
    <property type="entry name" value="Calreticulin 3"/>
    <property type="match status" value="1"/>
</dbReference>
<dbReference type="Gene3D" id="2.60.120.200">
    <property type="match status" value="1"/>
</dbReference>
<dbReference type="Gene3D" id="2.10.250.10">
    <property type="entry name" value="Calreticulin/calnexin, P domain"/>
    <property type="match status" value="1"/>
</dbReference>
<dbReference type="InterPro" id="IPR001580">
    <property type="entry name" value="Calret/calnex"/>
</dbReference>
<dbReference type="InterPro" id="IPR018124">
    <property type="entry name" value="Calret/calnex_CS"/>
</dbReference>
<dbReference type="InterPro" id="IPR009169">
    <property type="entry name" value="Calreticulin"/>
</dbReference>
<dbReference type="InterPro" id="IPR009033">
    <property type="entry name" value="Calreticulin/calnexin_P_dom_sf"/>
</dbReference>
<dbReference type="InterPro" id="IPR013320">
    <property type="entry name" value="ConA-like_dom_sf"/>
</dbReference>
<dbReference type="PANTHER" id="PTHR11073:SF16">
    <property type="entry name" value="CALRETICULIN"/>
    <property type="match status" value="1"/>
</dbReference>
<dbReference type="PANTHER" id="PTHR11073">
    <property type="entry name" value="CALRETICULIN AND CALNEXIN"/>
    <property type="match status" value="1"/>
</dbReference>
<dbReference type="Pfam" id="PF00262">
    <property type="entry name" value="Calreticulin"/>
    <property type="match status" value="2"/>
</dbReference>
<dbReference type="PIRSF" id="PIRSF002356">
    <property type="entry name" value="Calreticulin"/>
    <property type="match status" value="1"/>
</dbReference>
<dbReference type="PRINTS" id="PR00626">
    <property type="entry name" value="CALRETICULIN"/>
</dbReference>
<dbReference type="SUPFAM" id="SSF49899">
    <property type="entry name" value="Concanavalin A-like lectins/glucanases"/>
    <property type="match status" value="1"/>
</dbReference>
<dbReference type="SUPFAM" id="SSF63887">
    <property type="entry name" value="P-domain of calnexin/calreticulin"/>
    <property type="match status" value="1"/>
</dbReference>
<dbReference type="PROSITE" id="PS00803">
    <property type="entry name" value="CALRETICULIN_1"/>
    <property type="match status" value="1"/>
</dbReference>
<dbReference type="PROSITE" id="PS00804">
    <property type="entry name" value="CALRETICULIN_2"/>
    <property type="match status" value="1"/>
</dbReference>
<dbReference type="PROSITE" id="PS00805">
    <property type="entry name" value="CALRETICULIN_REPEAT"/>
    <property type="match status" value="3"/>
</dbReference>
<dbReference type="PROSITE" id="PS00014">
    <property type="entry name" value="ER_TARGET"/>
    <property type="match status" value="1"/>
</dbReference>